<evidence type="ECO:0000255" key="1">
    <source>
        <dbReference type="HAMAP-Rule" id="MF_01395"/>
    </source>
</evidence>
<evidence type="ECO:0000255" key="2">
    <source>
        <dbReference type="PROSITE-ProRule" id="PRU01136"/>
    </source>
</evidence>
<evidence type="ECO:0000256" key="3">
    <source>
        <dbReference type="SAM" id="MobiDB-lite"/>
    </source>
</evidence>
<comment type="function">
    <text evidence="1">Component of the acetyl coenzyme A carboxylase (ACC) complex. Biotin carboxylase (BC) catalyzes the carboxylation of biotin on its carrier protein (BCCP) and then the CO(2) group is transferred by the transcarboxylase to acetyl-CoA to form malonyl-CoA.</text>
</comment>
<comment type="catalytic activity">
    <reaction evidence="1">
        <text>N(6)-carboxybiotinyl-L-lysyl-[protein] + acetyl-CoA = N(6)-biotinyl-L-lysyl-[protein] + malonyl-CoA</text>
        <dbReference type="Rhea" id="RHEA:54728"/>
        <dbReference type="Rhea" id="RHEA-COMP:10505"/>
        <dbReference type="Rhea" id="RHEA-COMP:10506"/>
        <dbReference type="ChEBI" id="CHEBI:57288"/>
        <dbReference type="ChEBI" id="CHEBI:57384"/>
        <dbReference type="ChEBI" id="CHEBI:83144"/>
        <dbReference type="ChEBI" id="CHEBI:83145"/>
        <dbReference type="EC" id="2.1.3.15"/>
    </reaction>
</comment>
<comment type="pathway">
    <text evidence="1">Lipid metabolism; malonyl-CoA biosynthesis; malonyl-CoA from acetyl-CoA: step 1/1.</text>
</comment>
<comment type="subunit">
    <text evidence="1">Acetyl-CoA carboxylase is a heterohexamer composed of biotin carboxyl carrier protein (AccB), biotin carboxylase (AccC) and two subunits each of ACCase subunit alpha (AccA) and ACCase subunit beta (AccD).</text>
</comment>
<comment type="subcellular location">
    <subcellularLocation>
        <location evidence="1">Cytoplasm</location>
    </subcellularLocation>
</comment>
<comment type="similarity">
    <text evidence="1">Belongs to the AccD/PCCB family.</text>
</comment>
<proteinExistence type="inferred from homology"/>
<sequence>MNWITNYVRPKINSMLGRREMPENLWIKDPSTGEMVFHKDLESNQFVIPSSGHHMRIKAKDRLRFFFDNGEYTTLEAPKVPVDPLKFRDEKKYIDRLKDYRTRTGMDDAIVNGLGTIDGLPIVATVQDFGFMGGSLGMGAGEAIIQGFEKAIELKRPLVLFAASGGARMQEGILSLMQLPRTTVAVEMLKEAGLPYIVVLTNPTTGGVTASYAMLGDIHIAEPGALIGFAGPRVIEQTIREKLPEGFQSADYLMEHGMVDMVVSRLELKDTIARLLKIMTRQPGNSDAPEHEKTEATDKAA</sequence>
<keyword id="KW-0067">ATP-binding</keyword>
<keyword id="KW-0963">Cytoplasm</keyword>
<keyword id="KW-0275">Fatty acid biosynthesis</keyword>
<keyword id="KW-0276">Fatty acid metabolism</keyword>
<keyword id="KW-0444">Lipid biosynthesis</keyword>
<keyword id="KW-0443">Lipid metabolism</keyword>
<keyword id="KW-0547">Nucleotide-binding</keyword>
<keyword id="KW-1185">Reference proteome</keyword>
<keyword id="KW-0808">Transferase</keyword>
<gene>
    <name evidence="1" type="primary">accD</name>
    <name type="ordered locus">Oant_0813</name>
</gene>
<protein>
    <recommendedName>
        <fullName evidence="1">Acetyl-coenzyme A carboxylase carboxyl transferase subunit beta</fullName>
        <shortName evidence="1">ACCase subunit beta</shortName>
        <shortName evidence="1">Acetyl-CoA carboxylase carboxyltransferase subunit beta</shortName>
        <ecNumber evidence="1">2.1.3.15</ecNumber>
    </recommendedName>
</protein>
<name>ACCD_BRUA4</name>
<dbReference type="EC" id="2.1.3.15" evidence="1"/>
<dbReference type="EMBL" id="CP000758">
    <property type="protein sequence ID" value="ABS13535.1"/>
    <property type="molecule type" value="Genomic_DNA"/>
</dbReference>
<dbReference type="RefSeq" id="WP_012091042.1">
    <property type="nucleotide sequence ID" value="NC_009667.1"/>
</dbReference>
<dbReference type="SMR" id="A6WX31"/>
<dbReference type="STRING" id="439375.Oant_0813"/>
<dbReference type="KEGG" id="oan:Oant_0813"/>
<dbReference type="PATRIC" id="fig|439375.7.peg.858"/>
<dbReference type="eggNOG" id="COG0777">
    <property type="taxonomic scope" value="Bacteria"/>
</dbReference>
<dbReference type="HOGENOM" id="CLU_015486_1_0_5"/>
<dbReference type="PhylomeDB" id="A6WX31"/>
<dbReference type="UniPathway" id="UPA00655">
    <property type="reaction ID" value="UER00711"/>
</dbReference>
<dbReference type="Proteomes" id="UP000002301">
    <property type="component" value="Chromosome 1"/>
</dbReference>
<dbReference type="GO" id="GO:0009329">
    <property type="term" value="C:acetate CoA-transferase complex"/>
    <property type="evidence" value="ECO:0007669"/>
    <property type="project" value="TreeGrafter"/>
</dbReference>
<dbReference type="GO" id="GO:0003989">
    <property type="term" value="F:acetyl-CoA carboxylase activity"/>
    <property type="evidence" value="ECO:0007669"/>
    <property type="project" value="InterPro"/>
</dbReference>
<dbReference type="GO" id="GO:0005524">
    <property type="term" value="F:ATP binding"/>
    <property type="evidence" value="ECO:0007669"/>
    <property type="project" value="UniProtKB-KW"/>
</dbReference>
<dbReference type="GO" id="GO:0016743">
    <property type="term" value="F:carboxyl- or carbamoyltransferase activity"/>
    <property type="evidence" value="ECO:0007669"/>
    <property type="project" value="UniProtKB-UniRule"/>
</dbReference>
<dbReference type="GO" id="GO:0006633">
    <property type="term" value="P:fatty acid biosynthetic process"/>
    <property type="evidence" value="ECO:0007669"/>
    <property type="project" value="UniProtKB-KW"/>
</dbReference>
<dbReference type="GO" id="GO:2001295">
    <property type="term" value="P:malonyl-CoA biosynthetic process"/>
    <property type="evidence" value="ECO:0007669"/>
    <property type="project" value="UniProtKB-UniRule"/>
</dbReference>
<dbReference type="Gene3D" id="3.90.226.10">
    <property type="entry name" value="2-enoyl-CoA Hydratase, Chain A, domain 1"/>
    <property type="match status" value="1"/>
</dbReference>
<dbReference type="HAMAP" id="MF_01395">
    <property type="entry name" value="AcetylCoA_CT_beta"/>
    <property type="match status" value="1"/>
</dbReference>
<dbReference type="InterPro" id="IPR034733">
    <property type="entry name" value="AcCoA_carboxyl_beta"/>
</dbReference>
<dbReference type="InterPro" id="IPR000438">
    <property type="entry name" value="Acetyl_CoA_COase_Trfase_b_su"/>
</dbReference>
<dbReference type="InterPro" id="IPR029045">
    <property type="entry name" value="ClpP/crotonase-like_dom_sf"/>
</dbReference>
<dbReference type="InterPro" id="IPR011762">
    <property type="entry name" value="COA_CT_N"/>
</dbReference>
<dbReference type="NCBIfam" id="TIGR00515">
    <property type="entry name" value="accD"/>
    <property type="match status" value="1"/>
</dbReference>
<dbReference type="PANTHER" id="PTHR42995">
    <property type="entry name" value="ACETYL-COENZYME A CARBOXYLASE CARBOXYL TRANSFERASE SUBUNIT BETA, CHLOROPLASTIC"/>
    <property type="match status" value="1"/>
</dbReference>
<dbReference type="PANTHER" id="PTHR42995:SF5">
    <property type="entry name" value="ACETYL-COENZYME A CARBOXYLASE CARBOXYL TRANSFERASE SUBUNIT BETA, CHLOROPLASTIC"/>
    <property type="match status" value="1"/>
</dbReference>
<dbReference type="Pfam" id="PF01039">
    <property type="entry name" value="Carboxyl_trans"/>
    <property type="match status" value="1"/>
</dbReference>
<dbReference type="PRINTS" id="PR01070">
    <property type="entry name" value="ACCCTRFRASEB"/>
</dbReference>
<dbReference type="SUPFAM" id="SSF52096">
    <property type="entry name" value="ClpP/crotonase"/>
    <property type="match status" value="1"/>
</dbReference>
<dbReference type="PROSITE" id="PS50980">
    <property type="entry name" value="COA_CT_NTER"/>
    <property type="match status" value="1"/>
</dbReference>
<reference key="1">
    <citation type="journal article" date="2011" name="J. Bacteriol.">
        <title>Genome of Ochrobactrum anthropi ATCC 49188 T, a versatile opportunistic pathogen and symbiont of several eukaryotic hosts.</title>
        <authorList>
            <person name="Chain P.S."/>
            <person name="Lang D.M."/>
            <person name="Comerci D.J."/>
            <person name="Malfatti S.A."/>
            <person name="Vergez L.M."/>
            <person name="Shin M."/>
            <person name="Ugalde R.A."/>
            <person name="Garcia E."/>
            <person name="Tolmasky M.E."/>
        </authorList>
    </citation>
    <scope>NUCLEOTIDE SEQUENCE [LARGE SCALE GENOMIC DNA]</scope>
    <source>
        <strain>ATCC 49188 / DSM 6882 / CCUG 24695 / JCM 21032 / LMG 3331 / NBRC 15819 / NCTC 12168 / Alc 37</strain>
    </source>
</reference>
<accession>A6WX31</accession>
<organism>
    <name type="scientific">Brucella anthropi (strain ATCC 49188 / DSM 6882 / CCUG 24695 / JCM 21032 / LMG 3331 / NBRC 15819 / NCTC 12168 / Alc 37)</name>
    <name type="common">Ochrobactrum anthropi</name>
    <dbReference type="NCBI Taxonomy" id="439375"/>
    <lineage>
        <taxon>Bacteria</taxon>
        <taxon>Pseudomonadati</taxon>
        <taxon>Pseudomonadota</taxon>
        <taxon>Alphaproteobacteria</taxon>
        <taxon>Hyphomicrobiales</taxon>
        <taxon>Brucellaceae</taxon>
        <taxon>Brucella/Ochrobactrum group</taxon>
        <taxon>Brucella</taxon>
    </lineage>
</organism>
<feature type="chain" id="PRO_0000389806" description="Acetyl-coenzyme A carboxylase carboxyl transferase subunit beta">
    <location>
        <begin position="1"/>
        <end position="301"/>
    </location>
</feature>
<feature type="domain" description="CoA carboxyltransferase N-terminal" evidence="2">
    <location>
        <begin position="25"/>
        <end position="294"/>
    </location>
</feature>
<feature type="region of interest" description="Disordered" evidence="3">
    <location>
        <begin position="282"/>
        <end position="301"/>
    </location>
</feature>
<feature type="compositionally biased region" description="Basic and acidic residues" evidence="3">
    <location>
        <begin position="288"/>
        <end position="301"/>
    </location>
</feature>